<accession>Q01870</accession>
<accession>B6HRB1</accession>
<sequence length="520" mass="56885">MFAQPYDHSFNDLFNQYVNMETSAVDGKDSALSDFDQLFPLDSLSSDCGDLPPTVSTPKRHQSPQPWSNEWSLQDDGAAADHFAFHDTVHPSAISDVNLNNFEVPSRPTASHGLSTSPSTPPATPRRKPTQSALITPKSIRHRSPNERRSHLRKQSFSPSLMRSSNLSKARMAYPEAWAQRLQNFSLHGSEDRLPLSPPPSDVLIQHENMPTEQIMNQHGDSAERPSQYDARLYQQSPSVSMPSPSIAMSARQQQHYIAQPSSSSLTNSSPSSADDIFSSSHSSDPHSLSSWQSDPLHASSLSFTPDLQGQDSQWWSPMPSRVAQQQAAYLTSPTPVRTMQSVGSQNDMMQGGLMIQFNPSYDMSADHSFSSSNMLPATPQKFDTSFNTSQVHNVSRSPSLSPKAGTSPRDTRNGSISKPTHRRTHSRKLSGQSMNAPKPAKASGSSSRGSNKSVSVSFVNFTAHDSKKILTGVAPSGSSKTKARREQEARDRRRKLSEAALRAVRSAGGDVEALEAVLC</sequence>
<feature type="chain" id="PRO_0000065962" description="Developmental regulatory protein wetA">
    <location>
        <begin position="1"/>
        <end position="520"/>
    </location>
</feature>
<feature type="region of interest" description="Disordered" evidence="2">
    <location>
        <begin position="49"/>
        <end position="72"/>
    </location>
</feature>
<feature type="region of interest" description="Disordered" evidence="2">
    <location>
        <begin position="104"/>
        <end position="165"/>
    </location>
</feature>
<feature type="region of interest" description="Disordered" evidence="2">
    <location>
        <begin position="236"/>
        <end position="295"/>
    </location>
</feature>
<feature type="region of interest" description="Disordered" evidence="2">
    <location>
        <begin position="367"/>
        <end position="453"/>
    </location>
</feature>
<feature type="region of interest" description="Disordered" evidence="2">
    <location>
        <begin position="471"/>
        <end position="496"/>
    </location>
</feature>
<feature type="compositionally biased region" description="Polar residues" evidence="2">
    <location>
        <begin position="63"/>
        <end position="72"/>
    </location>
</feature>
<feature type="compositionally biased region" description="Polar residues" evidence="2">
    <location>
        <begin position="104"/>
        <end position="114"/>
    </location>
</feature>
<feature type="compositionally biased region" description="Polar residues" evidence="2">
    <location>
        <begin position="155"/>
        <end position="165"/>
    </location>
</feature>
<feature type="compositionally biased region" description="Low complexity" evidence="2">
    <location>
        <begin position="237"/>
        <end position="251"/>
    </location>
</feature>
<feature type="compositionally biased region" description="Polar residues" evidence="2">
    <location>
        <begin position="252"/>
        <end position="261"/>
    </location>
</feature>
<feature type="compositionally biased region" description="Low complexity" evidence="2">
    <location>
        <begin position="262"/>
        <end position="295"/>
    </location>
</feature>
<feature type="compositionally biased region" description="Polar residues" evidence="2">
    <location>
        <begin position="367"/>
        <end position="401"/>
    </location>
</feature>
<feature type="compositionally biased region" description="Basic residues" evidence="2">
    <location>
        <begin position="420"/>
        <end position="429"/>
    </location>
</feature>
<feature type="compositionally biased region" description="Low complexity" evidence="2">
    <location>
        <begin position="436"/>
        <end position="453"/>
    </location>
</feature>
<feature type="sequence conflict" description="In Ref. 1; CAA56364." evidence="6" ref="1">
    <original>P</original>
    <variation>A</variation>
    <location>
        <position position="226"/>
    </location>
</feature>
<feature type="sequence conflict" description="In Ref. 1; CAA56364." evidence="6" ref="1">
    <original>A</original>
    <variation>G</variation>
    <location>
        <position position="328"/>
    </location>
</feature>
<gene>
    <name evidence="5" type="primary">wetA</name>
    <name type="ORF">Pc22g03220</name>
</gene>
<dbReference type="EMBL" id="X80058">
    <property type="protein sequence ID" value="CAA56364.1"/>
    <property type="status" value="ALT_FRAME"/>
    <property type="molecule type" value="Genomic_DNA"/>
</dbReference>
<dbReference type="EMBL" id="AM920437">
    <property type="protein sequence ID" value="CAP97610.1"/>
    <property type="molecule type" value="Genomic_DNA"/>
</dbReference>
<dbReference type="PIR" id="S46660">
    <property type="entry name" value="S46660"/>
</dbReference>
<dbReference type="RefSeq" id="XP_002564365.1">
    <property type="nucleotide sequence ID" value="XM_002564319.1"/>
</dbReference>
<dbReference type="STRING" id="500485.Q01870"/>
<dbReference type="GeneID" id="8311640"/>
<dbReference type="KEGG" id="pcs:N7525_005886"/>
<dbReference type="VEuPathDB" id="FungiDB:PCH_Pc22g03220"/>
<dbReference type="eggNOG" id="ENOG502S8IT">
    <property type="taxonomic scope" value="Eukaryota"/>
</dbReference>
<dbReference type="HOGENOM" id="CLU_030750_0_0_1"/>
<dbReference type="OMA" id="MFAQPFD"/>
<dbReference type="OrthoDB" id="2575228at2759"/>
<dbReference type="Proteomes" id="UP000000724">
    <property type="component" value="Contig Pc00c22"/>
</dbReference>
<dbReference type="GO" id="GO:0048315">
    <property type="term" value="P:conidium formation"/>
    <property type="evidence" value="ECO:0007669"/>
    <property type="project" value="UniProtKB-KW"/>
</dbReference>
<dbReference type="GO" id="GO:0030435">
    <property type="term" value="P:sporulation resulting in formation of a cellular spore"/>
    <property type="evidence" value="ECO:0007669"/>
    <property type="project" value="UniProtKB-KW"/>
</dbReference>
<dbReference type="InterPro" id="IPR040112">
    <property type="entry name" value="WetA"/>
</dbReference>
<dbReference type="PANTHER" id="PTHR22934:SF25">
    <property type="entry name" value="DEVELOPMENTAL REGULATORY PROTEIN WETA"/>
    <property type="match status" value="1"/>
</dbReference>
<dbReference type="PANTHER" id="PTHR22934">
    <property type="entry name" value="PROTEIN ESC1/WETA-RELATED"/>
    <property type="match status" value="1"/>
</dbReference>
<protein>
    <recommendedName>
        <fullName evidence="6">Developmental regulatory protein wetA</fullName>
    </recommendedName>
</protein>
<proteinExistence type="evidence at transcript level"/>
<evidence type="ECO:0000250" key="1">
    <source>
        <dbReference type="UniProtKB" id="P22022"/>
    </source>
</evidence>
<evidence type="ECO:0000256" key="2">
    <source>
        <dbReference type="SAM" id="MobiDB-lite"/>
    </source>
</evidence>
<evidence type="ECO:0000269" key="3">
    <source>
    </source>
</evidence>
<evidence type="ECO:0000269" key="4">
    <source>
    </source>
</evidence>
<evidence type="ECO:0000303" key="5">
    <source>
    </source>
</evidence>
<evidence type="ECO:0000305" key="6"/>
<comment type="function">
    <text evidence="1 4">BrlA, abaA and wetA are pivotal regulators of conidiophore development and conidium maturation (By similarity). They act individually and together to regulate their own expression and that of numerous other sporulation-specific genes (By similarity). Responsible for activating a set of genes whose products make up the final two conidial wall layers or direct their assembly and though this activity is responsible for acquisition of spore dormancy (PubMed:8078481).</text>
</comment>
<comment type="induction">
    <text evidence="3">Expression is regulated by the heterotrimeric G protein pga1 (PubMed:18364746).</text>
</comment>
<comment type="similarity">
    <text evidence="6">Belongs to the wetA family.</text>
</comment>
<comment type="sequence caution" evidence="6">
    <conflict type="frameshift">
        <sequence resource="EMBL-CDS" id="CAA56364"/>
    </conflict>
</comment>
<organism>
    <name type="scientific">Penicillium rubens (strain ATCC 28089 / DSM 1075 / NRRL 1951 / Wisconsin 54-1255)</name>
    <name type="common">Penicillium chrysogenum</name>
    <dbReference type="NCBI Taxonomy" id="500485"/>
    <lineage>
        <taxon>Eukaryota</taxon>
        <taxon>Fungi</taxon>
        <taxon>Dikarya</taxon>
        <taxon>Ascomycota</taxon>
        <taxon>Pezizomycotina</taxon>
        <taxon>Eurotiomycetes</taxon>
        <taxon>Eurotiomycetidae</taxon>
        <taxon>Eurotiales</taxon>
        <taxon>Aspergillaceae</taxon>
        <taxon>Penicillium</taxon>
        <taxon>Penicillium chrysogenum species complex</taxon>
    </lineage>
</organism>
<keyword id="KW-0010">Activator</keyword>
<keyword id="KW-0183">Conidiation</keyword>
<keyword id="KW-1185">Reference proteome</keyword>
<keyword id="KW-0749">Sporulation</keyword>
<keyword id="KW-0804">Transcription</keyword>
<keyword id="KW-0805">Transcription regulation</keyword>
<name>WETA_PENRW</name>
<reference key="1">
    <citation type="journal article" date="1994" name="Mol. Gen. Genet.">
        <title>The Penicillium chrysogenum and Aspergillus nidulans wetA developmental regulatory genes are functionally equivalent.</title>
        <authorList>
            <person name="Prade R.A."/>
            <person name="Timberlake W.E."/>
        </authorList>
    </citation>
    <scope>NUCLEOTIDE SEQUENCE [GENOMIC DNA]</scope>
    <scope>FUNCTION</scope>
</reference>
<reference key="2">
    <citation type="journal article" date="2008" name="Nat. Biotechnol.">
        <title>Genome sequencing and analysis of the filamentous fungus Penicillium chrysogenum.</title>
        <authorList>
            <person name="van den Berg M.A."/>
            <person name="Albang R."/>
            <person name="Albermann K."/>
            <person name="Badger J.H."/>
            <person name="Daran J.-M."/>
            <person name="Driessen A.J.M."/>
            <person name="Garcia-Estrada C."/>
            <person name="Fedorova N.D."/>
            <person name="Harris D.M."/>
            <person name="Heijne W.H.M."/>
            <person name="Joardar V.S."/>
            <person name="Kiel J.A.K.W."/>
            <person name="Kovalchuk A."/>
            <person name="Martin J.F."/>
            <person name="Nierman W.C."/>
            <person name="Nijland J.G."/>
            <person name="Pronk J.T."/>
            <person name="Roubos J.A."/>
            <person name="van der Klei I.J."/>
            <person name="van Peij N.N.M.E."/>
            <person name="Veenhuis M."/>
            <person name="von Doehren H."/>
            <person name="Wagner C."/>
            <person name="Wortman J.R."/>
            <person name="Bovenberg R.A.L."/>
        </authorList>
    </citation>
    <scope>NUCLEOTIDE SEQUENCE [LARGE SCALE GENOMIC DNA]</scope>
    <source>
        <strain>ATCC 28089 / DSM 1075 / NRRL 1951 / Wisconsin 54-1255</strain>
    </source>
</reference>
<reference key="3">
    <citation type="journal article" date="2008" name="Biochem. Cell Biol.">
        <title>Heterotrimeric Galpha protein Pga1 of Penicillium chrysogenum controls conidiation mainly by a cAMP-independent mechanism.</title>
        <authorList>
            <person name="Garcia-Rico R.O."/>
            <person name="Fierro F."/>
            <person name="Martin J.F."/>
        </authorList>
    </citation>
    <scope>INDUCTION</scope>
</reference>